<name>G6PI_LEPBA</name>
<accession>B0S9I4</accession>
<dbReference type="EC" id="5.3.1.9" evidence="1"/>
<dbReference type="EMBL" id="CP000777">
    <property type="protein sequence ID" value="ABZ92621.1"/>
    <property type="molecule type" value="Genomic_DNA"/>
</dbReference>
<dbReference type="RefSeq" id="WP_012387111.1">
    <property type="nucleotide sequence ID" value="NC_010842.1"/>
</dbReference>
<dbReference type="SMR" id="B0S9I4"/>
<dbReference type="KEGG" id="lbf:LBF_0074"/>
<dbReference type="HOGENOM" id="CLU_037303_0_1_12"/>
<dbReference type="UniPathway" id="UPA00109">
    <property type="reaction ID" value="UER00181"/>
</dbReference>
<dbReference type="UniPathway" id="UPA00138"/>
<dbReference type="GO" id="GO:0005829">
    <property type="term" value="C:cytosol"/>
    <property type="evidence" value="ECO:0007669"/>
    <property type="project" value="TreeGrafter"/>
</dbReference>
<dbReference type="GO" id="GO:0097367">
    <property type="term" value="F:carbohydrate derivative binding"/>
    <property type="evidence" value="ECO:0007669"/>
    <property type="project" value="InterPro"/>
</dbReference>
<dbReference type="GO" id="GO:0004347">
    <property type="term" value="F:glucose-6-phosphate isomerase activity"/>
    <property type="evidence" value="ECO:0007669"/>
    <property type="project" value="UniProtKB-UniRule"/>
</dbReference>
<dbReference type="GO" id="GO:0048029">
    <property type="term" value="F:monosaccharide binding"/>
    <property type="evidence" value="ECO:0007669"/>
    <property type="project" value="TreeGrafter"/>
</dbReference>
<dbReference type="GO" id="GO:0006094">
    <property type="term" value="P:gluconeogenesis"/>
    <property type="evidence" value="ECO:0007669"/>
    <property type="project" value="UniProtKB-UniRule"/>
</dbReference>
<dbReference type="GO" id="GO:0051156">
    <property type="term" value="P:glucose 6-phosphate metabolic process"/>
    <property type="evidence" value="ECO:0007669"/>
    <property type="project" value="TreeGrafter"/>
</dbReference>
<dbReference type="GO" id="GO:0006096">
    <property type="term" value="P:glycolytic process"/>
    <property type="evidence" value="ECO:0007669"/>
    <property type="project" value="UniProtKB-UniRule"/>
</dbReference>
<dbReference type="CDD" id="cd05015">
    <property type="entry name" value="SIS_PGI_1"/>
    <property type="match status" value="1"/>
</dbReference>
<dbReference type="CDD" id="cd05016">
    <property type="entry name" value="SIS_PGI_2"/>
    <property type="match status" value="1"/>
</dbReference>
<dbReference type="FunFam" id="3.40.50.10490:FF:000015">
    <property type="entry name" value="Glucose-6-phosphate isomerase"/>
    <property type="match status" value="1"/>
</dbReference>
<dbReference type="FunFam" id="3.40.50.10490:FF:000016">
    <property type="entry name" value="Glucose-6-phosphate isomerase"/>
    <property type="match status" value="1"/>
</dbReference>
<dbReference type="Gene3D" id="3.40.50.10490">
    <property type="entry name" value="Glucose-6-phosphate isomerase like protein, domain 1"/>
    <property type="match status" value="2"/>
</dbReference>
<dbReference type="HAMAP" id="MF_00473">
    <property type="entry name" value="G6P_isomerase"/>
    <property type="match status" value="1"/>
</dbReference>
<dbReference type="InterPro" id="IPR001672">
    <property type="entry name" value="G6P_Isomerase"/>
</dbReference>
<dbReference type="InterPro" id="IPR018189">
    <property type="entry name" value="Phosphoglucose_isomerase_CS"/>
</dbReference>
<dbReference type="InterPro" id="IPR046348">
    <property type="entry name" value="SIS_dom_sf"/>
</dbReference>
<dbReference type="InterPro" id="IPR035476">
    <property type="entry name" value="SIS_PGI_1"/>
</dbReference>
<dbReference type="InterPro" id="IPR035482">
    <property type="entry name" value="SIS_PGI_2"/>
</dbReference>
<dbReference type="NCBIfam" id="NF010697">
    <property type="entry name" value="PRK14097.1"/>
    <property type="match status" value="1"/>
</dbReference>
<dbReference type="PANTHER" id="PTHR11469">
    <property type="entry name" value="GLUCOSE-6-PHOSPHATE ISOMERASE"/>
    <property type="match status" value="1"/>
</dbReference>
<dbReference type="PANTHER" id="PTHR11469:SF1">
    <property type="entry name" value="GLUCOSE-6-PHOSPHATE ISOMERASE"/>
    <property type="match status" value="1"/>
</dbReference>
<dbReference type="Pfam" id="PF00342">
    <property type="entry name" value="PGI"/>
    <property type="match status" value="1"/>
</dbReference>
<dbReference type="PRINTS" id="PR00662">
    <property type="entry name" value="G6PISOMERASE"/>
</dbReference>
<dbReference type="SUPFAM" id="SSF53697">
    <property type="entry name" value="SIS domain"/>
    <property type="match status" value="1"/>
</dbReference>
<dbReference type="PROSITE" id="PS00765">
    <property type="entry name" value="P_GLUCOSE_ISOMERASE_1"/>
    <property type="match status" value="1"/>
</dbReference>
<dbReference type="PROSITE" id="PS00174">
    <property type="entry name" value="P_GLUCOSE_ISOMERASE_2"/>
    <property type="match status" value="1"/>
</dbReference>
<dbReference type="PROSITE" id="PS51463">
    <property type="entry name" value="P_GLUCOSE_ISOMERASE_3"/>
    <property type="match status" value="1"/>
</dbReference>
<gene>
    <name evidence="1" type="primary">pgi</name>
    <name type="ordered locus">LBF_0074</name>
</gene>
<evidence type="ECO:0000255" key="1">
    <source>
        <dbReference type="HAMAP-Rule" id="MF_00473"/>
    </source>
</evidence>
<reference key="1">
    <citation type="journal article" date="2008" name="PLoS ONE">
        <title>Genome sequence of the saprophyte Leptospira biflexa provides insights into the evolution of Leptospira and the pathogenesis of leptospirosis.</title>
        <authorList>
            <person name="Picardeau M."/>
            <person name="Bulach D.M."/>
            <person name="Bouchier C."/>
            <person name="Zuerner R.L."/>
            <person name="Zidane N."/>
            <person name="Wilson P.J."/>
            <person name="Creno S."/>
            <person name="Kuczek E.S."/>
            <person name="Bommezzadri S."/>
            <person name="Davis J.C."/>
            <person name="McGrath A."/>
            <person name="Johnson M.J."/>
            <person name="Boursaux-Eude C."/>
            <person name="Seemann T."/>
            <person name="Rouy Z."/>
            <person name="Coppel R.L."/>
            <person name="Rood J.I."/>
            <person name="Lajus A."/>
            <person name="Davies J.K."/>
            <person name="Medigue C."/>
            <person name="Adler B."/>
        </authorList>
    </citation>
    <scope>NUCLEOTIDE SEQUENCE [LARGE SCALE GENOMIC DNA]</scope>
    <source>
        <strain>Patoc 1 / Ames</strain>
    </source>
</reference>
<comment type="function">
    <text evidence="1">Catalyzes the reversible isomerization of glucose-6-phosphate to fructose-6-phosphate.</text>
</comment>
<comment type="catalytic activity">
    <reaction evidence="1">
        <text>alpha-D-glucose 6-phosphate = beta-D-fructose 6-phosphate</text>
        <dbReference type="Rhea" id="RHEA:11816"/>
        <dbReference type="ChEBI" id="CHEBI:57634"/>
        <dbReference type="ChEBI" id="CHEBI:58225"/>
        <dbReference type="EC" id="5.3.1.9"/>
    </reaction>
</comment>
<comment type="pathway">
    <text evidence="1">Carbohydrate biosynthesis; gluconeogenesis.</text>
</comment>
<comment type="pathway">
    <text evidence="1">Carbohydrate degradation; glycolysis; D-glyceraldehyde 3-phosphate and glycerone phosphate from D-glucose: step 2/4.</text>
</comment>
<comment type="subcellular location">
    <subcellularLocation>
        <location evidence="1">Cytoplasm</location>
    </subcellularLocation>
</comment>
<comment type="similarity">
    <text evidence="1">Belongs to the GPI family.</text>
</comment>
<protein>
    <recommendedName>
        <fullName evidence="1">Glucose-6-phosphate isomerase</fullName>
        <shortName evidence="1">GPI</shortName>
        <ecNumber evidence="1">5.3.1.9</ecNumber>
    </recommendedName>
    <alternativeName>
        <fullName evidence="1">Phosphoglucose isomerase</fullName>
        <shortName evidence="1">PGI</shortName>
    </alternativeName>
    <alternativeName>
        <fullName evidence="1">Phosphohexose isomerase</fullName>
        <shortName evidence="1">PHI</shortName>
    </alternativeName>
</protein>
<proteinExistence type="inferred from homology"/>
<organism>
    <name type="scientific">Leptospira biflexa serovar Patoc (strain Patoc 1 / Ames)</name>
    <dbReference type="NCBI Taxonomy" id="355278"/>
    <lineage>
        <taxon>Bacteria</taxon>
        <taxon>Pseudomonadati</taxon>
        <taxon>Spirochaetota</taxon>
        <taxon>Spirochaetia</taxon>
        <taxon>Leptospirales</taxon>
        <taxon>Leptospiraceae</taxon>
        <taxon>Leptospira</taxon>
    </lineage>
</organism>
<feature type="chain" id="PRO_1000125736" description="Glucose-6-phosphate isomerase">
    <location>
        <begin position="1"/>
        <end position="450"/>
    </location>
</feature>
<feature type="active site" description="Proton donor" evidence="1">
    <location>
        <position position="289"/>
    </location>
</feature>
<feature type="active site" evidence="1">
    <location>
        <position position="310"/>
    </location>
</feature>
<feature type="active site" evidence="1">
    <location>
        <position position="424"/>
    </location>
</feature>
<sequence>MSNLKISDRFVKPFLDQSKLEKELERAEMARQTVLNGSGLGNEFLGWVNLPSQTKAEDLQNIRKAAELIQSHSQYLVVVGIGGSYLGARAVIEALTPEFSTPETQKKTVKILYAGHHLDADYHFRLLAFLENKEFSVNVISKSGTTTEPAIAFRLLLSLLERKYGKENIKHRVFATTDRSKGALKHLADEYKFPTFVIPDDVGGRYSVFTPVGLLPIAAAGFSINKLMDGAKQMESELKSTASKDGNLACFYAAIRNGLYSLGKTTEIFVSYNPSFGYVSEWWKQLFGESEGKNGKGIFPASVQFTTDLHSMGQYIQDGERKLMETVIKVEAPKQDVYLTEKTDDNDGLNYLAGKKLSEVNQSAMLGTLIAHKDGGVPCLEITLPSINEETLGELLYFYEFSCAVSGYMLGVNPFDQPGVEDYKNNMFALLGKKGYEKRKEEILSHLGFS</sequence>
<keyword id="KW-0963">Cytoplasm</keyword>
<keyword id="KW-0312">Gluconeogenesis</keyword>
<keyword id="KW-0324">Glycolysis</keyword>
<keyword id="KW-0413">Isomerase</keyword>